<sequence length="154" mass="17660">MLCPFCNHGELKVIDSRNAPESNAIKRRRECLRCSQRFTTFETVELTVQVLKRDGRYENFQESKLVNGLKAASSHTRIGQEQVQAIASNIKQDLLGKQNREISTKEIGELVMKYLKKADMIAYIRFACVYRRFKDVGELMEVLLSATPDGEKQT</sequence>
<accession>B0BC41</accession>
<feature type="chain" id="PRO_1000124480" description="Transcriptional repressor NrdR">
    <location>
        <begin position="1"/>
        <end position="154"/>
    </location>
</feature>
<feature type="domain" description="ATP-cone" evidence="1">
    <location>
        <begin position="48"/>
        <end position="138"/>
    </location>
</feature>
<feature type="zinc finger region" evidence="1">
    <location>
        <begin position="3"/>
        <end position="34"/>
    </location>
</feature>
<proteinExistence type="inferred from homology"/>
<comment type="function">
    <text evidence="1">Negatively regulates transcription of bacterial ribonucleotide reductase nrd genes and operons by binding to NrdR-boxes.</text>
</comment>
<comment type="cofactor">
    <cofactor evidence="1">
        <name>Zn(2+)</name>
        <dbReference type="ChEBI" id="CHEBI:29105"/>
    </cofactor>
    <text evidence="1">Binds 1 zinc ion.</text>
</comment>
<comment type="similarity">
    <text evidence="1">Belongs to the NrdR family.</text>
</comment>
<gene>
    <name evidence="1" type="primary">nrdR</name>
    <name type="ordered locus">CTLon_0659</name>
</gene>
<protein>
    <recommendedName>
        <fullName evidence="1">Transcriptional repressor NrdR</fullName>
    </recommendedName>
</protein>
<organism>
    <name type="scientific">Chlamydia trachomatis serovar L2b (strain UCH-1/proctitis)</name>
    <dbReference type="NCBI Taxonomy" id="471473"/>
    <lineage>
        <taxon>Bacteria</taxon>
        <taxon>Pseudomonadati</taxon>
        <taxon>Chlamydiota</taxon>
        <taxon>Chlamydiia</taxon>
        <taxon>Chlamydiales</taxon>
        <taxon>Chlamydiaceae</taxon>
        <taxon>Chlamydia/Chlamydophila group</taxon>
        <taxon>Chlamydia</taxon>
    </lineage>
</organism>
<keyword id="KW-0067">ATP-binding</keyword>
<keyword id="KW-0238">DNA-binding</keyword>
<keyword id="KW-0479">Metal-binding</keyword>
<keyword id="KW-0547">Nucleotide-binding</keyword>
<keyword id="KW-0678">Repressor</keyword>
<keyword id="KW-0804">Transcription</keyword>
<keyword id="KW-0805">Transcription regulation</keyword>
<keyword id="KW-0862">Zinc</keyword>
<keyword id="KW-0863">Zinc-finger</keyword>
<name>NRDR_CHLTB</name>
<reference key="1">
    <citation type="journal article" date="2008" name="Genome Res.">
        <title>Chlamydia trachomatis: genome sequence analysis of lymphogranuloma venereum isolates.</title>
        <authorList>
            <person name="Thomson N.R."/>
            <person name="Holden M.T.G."/>
            <person name="Carder C."/>
            <person name="Lennard N."/>
            <person name="Lockey S.J."/>
            <person name="Marsh P."/>
            <person name="Skipp P."/>
            <person name="O'Connor C.D."/>
            <person name="Goodhead I."/>
            <person name="Norbertzcak H."/>
            <person name="Harris B."/>
            <person name="Ormond D."/>
            <person name="Rance R."/>
            <person name="Quail M.A."/>
            <person name="Parkhill J."/>
            <person name="Stephens R.S."/>
            <person name="Clarke I.N."/>
        </authorList>
    </citation>
    <scope>NUCLEOTIDE SEQUENCE [LARGE SCALE GENOMIC DNA]</scope>
    <source>
        <strain>UCH-1/proctitis</strain>
    </source>
</reference>
<dbReference type="EMBL" id="AM884177">
    <property type="protein sequence ID" value="CAP07056.1"/>
    <property type="molecule type" value="Genomic_DNA"/>
</dbReference>
<dbReference type="RefSeq" id="WP_009871758.1">
    <property type="nucleotide sequence ID" value="NC_010280.2"/>
</dbReference>
<dbReference type="SMR" id="B0BC41"/>
<dbReference type="KEGG" id="ctl:CTLon_0659"/>
<dbReference type="HOGENOM" id="CLU_108412_0_0_0"/>
<dbReference type="Proteomes" id="UP001154401">
    <property type="component" value="Chromosome"/>
</dbReference>
<dbReference type="GO" id="GO:0005524">
    <property type="term" value="F:ATP binding"/>
    <property type="evidence" value="ECO:0007669"/>
    <property type="project" value="UniProtKB-KW"/>
</dbReference>
<dbReference type="GO" id="GO:0003677">
    <property type="term" value="F:DNA binding"/>
    <property type="evidence" value="ECO:0007669"/>
    <property type="project" value="UniProtKB-KW"/>
</dbReference>
<dbReference type="GO" id="GO:0008270">
    <property type="term" value="F:zinc ion binding"/>
    <property type="evidence" value="ECO:0007669"/>
    <property type="project" value="UniProtKB-UniRule"/>
</dbReference>
<dbReference type="GO" id="GO:0045892">
    <property type="term" value="P:negative regulation of DNA-templated transcription"/>
    <property type="evidence" value="ECO:0007669"/>
    <property type="project" value="UniProtKB-UniRule"/>
</dbReference>
<dbReference type="HAMAP" id="MF_00440">
    <property type="entry name" value="NrdR"/>
    <property type="match status" value="1"/>
</dbReference>
<dbReference type="InterPro" id="IPR005144">
    <property type="entry name" value="ATP-cone_dom"/>
</dbReference>
<dbReference type="InterPro" id="IPR055173">
    <property type="entry name" value="NrdR-like_N"/>
</dbReference>
<dbReference type="InterPro" id="IPR003796">
    <property type="entry name" value="RNR_NrdR-like"/>
</dbReference>
<dbReference type="NCBIfam" id="TIGR00244">
    <property type="entry name" value="transcriptional regulator NrdR"/>
    <property type="match status" value="1"/>
</dbReference>
<dbReference type="PANTHER" id="PTHR30455">
    <property type="entry name" value="TRANSCRIPTIONAL REPRESSOR NRDR"/>
    <property type="match status" value="1"/>
</dbReference>
<dbReference type="PANTHER" id="PTHR30455:SF2">
    <property type="entry name" value="TRANSCRIPTIONAL REPRESSOR NRDR"/>
    <property type="match status" value="1"/>
</dbReference>
<dbReference type="Pfam" id="PF03477">
    <property type="entry name" value="ATP-cone"/>
    <property type="match status" value="1"/>
</dbReference>
<dbReference type="Pfam" id="PF22811">
    <property type="entry name" value="Zn_ribbon_NrdR"/>
    <property type="match status" value="1"/>
</dbReference>
<dbReference type="PROSITE" id="PS51161">
    <property type="entry name" value="ATP_CONE"/>
    <property type="match status" value="1"/>
</dbReference>
<evidence type="ECO:0000255" key="1">
    <source>
        <dbReference type="HAMAP-Rule" id="MF_00440"/>
    </source>
</evidence>